<proteinExistence type="evidence at transcript level"/>
<organism>
    <name type="scientific">Oryza sativa subsp. japonica</name>
    <name type="common">Rice</name>
    <dbReference type="NCBI Taxonomy" id="39947"/>
    <lineage>
        <taxon>Eukaryota</taxon>
        <taxon>Viridiplantae</taxon>
        <taxon>Streptophyta</taxon>
        <taxon>Embryophyta</taxon>
        <taxon>Tracheophyta</taxon>
        <taxon>Spermatophyta</taxon>
        <taxon>Magnoliopsida</taxon>
        <taxon>Liliopsida</taxon>
        <taxon>Poales</taxon>
        <taxon>Poaceae</taxon>
        <taxon>BOP clade</taxon>
        <taxon>Oryzoideae</taxon>
        <taxon>Oryzeae</taxon>
        <taxon>Oryzinae</taxon>
        <taxon>Oryza</taxon>
        <taxon>Oryza sativa</taxon>
    </lineage>
</organism>
<feature type="chain" id="PRO_0000400012" description="Metal tolerance protein 4">
    <location>
        <begin position="1"/>
        <end position="397"/>
    </location>
</feature>
<feature type="topological domain" description="Cytoplasmic" evidence="2">
    <location>
        <begin position="1"/>
        <end position="104"/>
    </location>
</feature>
<feature type="transmembrane region" description="Helical" evidence="2">
    <location>
        <begin position="105"/>
        <end position="122"/>
    </location>
</feature>
<feature type="topological domain" description="Vacuolar" evidence="2">
    <location>
        <begin position="123"/>
        <end position="126"/>
    </location>
</feature>
<feature type="transmembrane region" description="Helical" evidence="2">
    <location>
        <begin position="127"/>
        <end position="147"/>
    </location>
</feature>
<feature type="topological domain" description="Cytoplasmic" evidence="2">
    <location>
        <begin position="148"/>
        <end position="170"/>
    </location>
</feature>
<feature type="transmembrane region" description="Helical" evidence="2">
    <location>
        <begin position="171"/>
        <end position="191"/>
    </location>
</feature>
<feature type="topological domain" description="Vacuolar" evidence="2">
    <location>
        <begin position="192"/>
        <end position="208"/>
    </location>
</feature>
<feature type="transmembrane region" description="Helical" evidence="2">
    <location>
        <begin position="209"/>
        <end position="229"/>
    </location>
</feature>
<feature type="topological domain" description="Cytoplasmic" evidence="2">
    <location>
        <begin position="230"/>
        <end position="248"/>
    </location>
</feature>
<feature type="transmembrane region" description="Helical" evidence="2">
    <location>
        <begin position="249"/>
        <end position="269"/>
    </location>
</feature>
<feature type="topological domain" description="Vacuolar" evidence="2">
    <location>
        <position position="270"/>
    </location>
</feature>
<feature type="transmembrane region" description="Helical" evidence="2">
    <location>
        <begin position="271"/>
        <end position="291"/>
    </location>
</feature>
<feature type="topological domain" description="Cytoplasmic" evidence="2">
    <location>
        <begin position="292"/>
        <end position="397"/>
    </location>
</feature>
<feature type="region of interest" description="Disordered" evidence="3">
    <location>
        <begin position="1"/>
        <end position="27"/>
    </location>
</feature>
<feature type="compositionally biased region" description="Basic and acidic residues" evidence="3">
    <location>
        <begin position="1"/>
        <end position="19"/>
    </location>
</feature>
<comment type="function">
    <text evidence="1">Involved in sequestration of excess metal in the cytoplasm into vacuoles to maintain metal homeostasis.</text>
</comment>
<comment type="subcellular location">
    <subcellularLocation>
        <location evidence="1">Vacuole membrane</location>
        <topology evidence="1">Multi-pass membrane protein</topology>
    </subcellularLocation>
    <text>Tonoplast.</text>
</comment>
<comment type="similarity">
    <text evidence="4">Belongs to the cation diffusion facilitator (CDF) transporter (TC 2.A.4) family. SLC30A subfamily.</text>
</comment>
<comment type="sequence caution" evidence="4">
    <conflict type="erroneous gene model prediction">
        <sequence resource="EMBL-CDS" id="AAN52756"/>
    </conflict>
</comment>
<comment type="sequence caution" evidence="4">
    <conflict type="erroneous gene model prediction">
        <sequence resource="EMBL-CDS" id="BAF11353"/>
    </conflict>
</comment>
<comment type="sequence caution" evidence="4">
    <conflict type="erroneous gene model prediction">
        <sequence resource="EMBL-CDS" id="EAZ26130"/>
    </conflict>
</comment>
<gene>
    <name type="primary">MTP4</name>
    <name type="ordered locus">Os03g0226400</name>
    <name type="ordered locus">LOC_Os03g12530</name>
    <name type="ORF">OsJ_09993</name>
    <name type="ORF">OSJNBa0081P02.21</name>
</gene>
<evidence type="ECO:0000250" key="1"/>
<evidence type="ECO:0000255" key="2"/>
<evidence type="ECO:0000256" key="3">
    <source>
        <dbReference type="SAM" id="MobiDB-lite"/>
    </source>
</evidence>
<evidence type="ECO:0000305" key="4"/>
<keyword id="KW-0406">Ion transport</keyword>
<keyword id="KW-0472">Membrane</keyword>
<keyword id="KW-1185">Reference proteome</keyword>
<keyword id="KW-0812">Transmembrane</keyword>
<keyword id="KW-1133">Transmembrane helix</keyword>
<keyword id="KW-0813">Transport</keyword>
<keyword id="KW-0926">Vacuole</keyword>
<reference key="1">
    <citation type="journal article" date="2005" name="Genome Res.">
        <title>Sequence, annotation, and analysis of synteny between rice chromosome 3 and diverged grass species.</title>
        <authorList>
            <consortium name="The rice chromosome 3 sequencing consortium"/>
            <person name="Buell C.R."/>
            <person name="Yuan Q."/>
            <person name="Ouyang S."/>
            <person name="Liu J."/>
            <person name="Zhu W."/>
            <person name="Wang A."/>
            <person name="Maiti R."/>
            <person name="Haas B."/>
            <person name="Wortman J."/>
            <person name="Pertea M."/>
            <person name="Jones K.M."/>
            <person name="Kim M."/>
            <person name="Overton L."/>
            <person name="Tsitrin T."/>
            <person name="Fadrosh D."/>
            <person name="Bera J."/>
            <person name="Weaver B."/>
            <person name="Jin S."/>
            <person name="Johri S."/>
            <person name="Reardon M."/>
            <person name="Webb K."/>
            <person name="Hill J."/>
            <person name="Moffat K."/>
            <person name="Tallon L."/>
            <person name="Van Aken S."/>
            <person name="Lewis M."/>
            <person name="Utterback T."/>
            <person name="Feldblyum T."/>
            <person name="Zismann V."/>
            <person name="Iobst S."/>
            <person name="Hsiao J."/>
            <person name="de Vazeille A.R."/>
            <person name="Salzberg S.L."/>
            <person name="White O."/>
            <person name="Fraser C.M."/>
            <person name="Yu Y."/>
            <person name="Kim H."/>
            <person name="Rambo T."/>
            <person name="Currie J."/>
            <person name="Collura K."/>
            <person name="Kernodle-Thompson S."/>
            <person name="Wei F."/>
            <person name="Kudrna K."/>
            <person name="Ammiraju J.S.S."/>
            <person name="Luo M."/>
            <person name="Goicoechea J.L."/>
            <person name="Wing R.A."/>
            <person name="Henry D."/>
            <person name="Oates R."/>
            <person name="Palmer M."/>
            <person name="Pries G."/>
            <person name="Saski C."/>
            <person name="Simmons J."/>
            <person name="Soderlund C."/>
            <person name="Nelson W."/>
            <person name="de la Bastide M."/>
            <person name="Spiegel L."/>
            <person name="Nascimento L."/>
            <person name="Huang E."/>
            <person name="Preston R."/>
            <person name="Zutavern T."/>
            <person name="Palmer L."/>
            <person name="O'Shaughnessy A."/>
            <person name="Dike S."/>
            <person name="McCombie W.R."/>
            <person name="Minx P."/>
            <person name="Cordum H."/>
            <person name="Wilson R."/>
            <person name="Jin W."/>
            <person name="Lee H.R."/>
            <person name="Jiang J."/>
            <person name="Jackson S."/>
        </authorList>
    </citation>
    <scope>NUCLEOTIDE SEQUENCE [LARGE SCALE GENOMIC DNA]</scope>
    <source>
        <strain>cv. Nipponbare</strain>
    </source>
</reference>
<reference key="2">
    <citation type="journal article" date="2005" name="Nature">
        <title>The map-based sequence of the rice genome.</title>
        <authorList>
            <consortium name="International rice genome sequencing project (IRGSP)"/>
        </authorList>
    </citation>
    <scope>NUCLEOTIDE SEQUENCE [LARGE SCALE GENOMIC DNA]</scope>
    <source>
        <strain>cv. Nipponbare</strain>
    </source>
</reference>
<reference key="3">
    <citation type="journal article" date="2008" name="Nucleic Acids Res.">
        <title>The rice annotation project database (RAP-DB): 2008 update.</title>
        <authorList>
            <consortium name="The rice annotation project (RAP)"/>
        </authorList>
    </citation>
    <scope>GENOME REANNOTATION</scope>
    <source>
        <strain>cv. Nipponbare</strain>
    </source>
</reference>
<reference key="4">
    <citation type="journal article" date="2013" name="Rice">
        <title>Improvement of the Oryza sativa Nipponbare reference genome using next generation sequence and optical map data.</title>
        <authorList>
            <person name="Kawahara Y."/>
            <person name="de la Bastide M."/>
            <person name="Hamilton J.P."/>
            <person name="Kanamori H."/>
            <person name="McCombie W.R."/>
            <person name="Ouyang S."/>
            <person name="Schwartz D.C."/>
            <person name="Tanaka T."/>
            <person name="Wu J."/>
            <person name="Zhou S."/>
            <person name="Childs K.L."/>
            <person name="Davidson R.M."/>
            <person name="Lin H."/>
            <person name="Quesada-Ocampo L."/>
            <person name="Vaillancourt B."/>
            <person name="Sakai H."/>
            <person name="Lee S.S."/>
            <person name="Kim J."/>
            <person name="Numa H."/>
            <person name="Itoh T."/>
            <person name="Buell C.R."/>
            <person name="Matsumoto T."/>
        </authorList>
    </citation>
    <scope>GENOME REANNOTATION</scope>
    <source>
        <strain>cv. Nipponbare</strain>
    </source>
</reference>
<reference key="5">
    <citation type="journal article" date="2005" name="PLoS Biol.">
        <title>The genomes of Oryza sativa: a history of duplications.</title>
        <authorList>
            <person name="Yu J."/>
            <person name="Wang J."/>
            <person name="Lin W."/>
            <person name="Li S."/>
            <person name="Li H."/>
            <person name="Zhou J."/>
            <person name="Ni P."/>
            <person name="Dong W."/>
            <person name="Hu S."/>
            <person name="Zeng C."/>
            <person name="Zhang J."/>
            <person name="Zhang Y."/>
            <person name="Li R."/>
            <person name="Xu Z."/>
            <person name="Li S."/>
            <person name="Li X."/>
            <person name="Zheng H."/>
            <person name="Cong L."/>
            <person name="Lin L."/>
            <person name="Yin J."/>
            <person name="Geng J."/>
            <person name="Li G."/>
            <person name="Shi J."/>
            <person name="Liu J."/>
            <person name="Lv H."/>
            <person name="Li J."/>
            <person name="Wang J."/>
            <person name="Deng Y."/>
            <person name="Ran L."/>
            <person name="Shi X."/>
            <person name="Wang X."/>
            <person name="Wu Q."/>
            <person name="Li C."/>
            <person name="Ren X."/>
            <person name="Wang J."/>
            <person name="Wang X."/>
            <person name="Li D."/>
            <person name="Liu D."/>
            <person name="Zhang X."/>
            <person name="Ji Z."/>
            <person name="Zhao W."/>
            <person name="Sun Y."/>
            <person name="Zhang Z."/>
            <person name="Bao J."/>
            <person name="Han Y."/>
            <person name="Dong L."/>
            <person name="Ji J."/>
            <person name="Chen P."/>
            <person name="Wu S."/>
            <person name="Liu J."/>
            <person name="Xiao Y."/>
            <person name="Bu D."/>
            <person name="Tan J."/>
            <person name="Yang L."/>
            <person name="Ye C."/>
            <person name="Zhang J."/>
            <person name="Xu J."/>
            <person name="Zhou Y."/>
            <person name="Yu Y."/>
            <person name="Zhang B."/>
            <person name="Zhuang S."/>
            <person name="Wei H."/>
            <person name="Liu B."/>
            <person name="Lei M."/>
            <person name="Yu H."/>
            <person name="Li Y."/>
            <person name="Xu H."/>
            <person name="Wei S."/>
            <person name="He X."/>
            <person name="Fang L."/>
            <person name="Zhang Z."/>
            <person name="Zhang Y."/>
            <person name="Huang X."/>
            <person name="Su Z."/>
            <person name="Tong W."/>
            <person name="Li J."/>
            <person name="Tong Z."/>
            <person name="Li S."/>
            <person name="Ye J."/>
            <person name="Wang L."/>
            <person name="Fang L."/>
            <person name="Lei T."/>
            <person name="Chen C.-S."/>
            <person name="Chen H.-C."/>
            <person name="Xu Z."/>
            <person name="Li H."/>
            <person name="Huang H."/>
            <person name="Zhang F."/>
            <person name="Xu H."/>
            <person name="Li N."/>
            <person name="Zhao C."/>
            <person name="Li S."/>
            <person name="Dong L."/>
            <person name="Huang Y."/>
            <person name="Li L."/>
            <person name="Xi Y."/>
            <person name="Qi Q."/>
            <person name="Li W."/>
            <person name="Zhang B."/>
            <person name="Hu W."/>
            <person name="Zhang Y."/>
            <person name="Tian X."/>
            <person name="Jiao Y."/>
            <person name="Liang X."/>
            <person name="Jin J."/>
            <person name="Gao L."/>
            <person name="Zheng W."/>
            <person name="Hao B."/>
            <person name="Liu S.-M."/>
            <person name="Wang W."/>
            <person name="Yuan L."/>
            <person name="Cao M."/>
            <person name="McDermott J."/>
            <person name="Samudrala R."/>
            <person name="Wang J."/>
            <person name="Wong G.K.-S."/>
            <person name="Yang H."/>
        </authorList>
    </citation>
    <scope>NUCLEOTIDE SEQUENCE [LARGE SCALE GENOMIC DNA]</scope>
    <source>
        <strain>cv. Nipponbare</strain>
    </source>
</reference>
<reference key="6">
    <citation type="journal article" date="2003" name="Science">
        <title>Collection, mapping, and annotation of over 28,000 cDNA clones from japonica rice.</title>
        <authorList>
            <consortium name="The rice full-length cDNA consortium"/>
        </authorList>
    </citation>
    <scope>NUCLEOTIDE SEQUENCE [LARGE SCALE MRNA]</scope>
    <source>
        <strain>cv. Nipponbare</strain>
    </source>
</reference>
<dbReference type="EMBL" id="AC107226">
    <property type="protein sequence ID" value="AAN52756.1"/>
    <property type="status" value="ALT_SEQ"/>
    <property type="molecule type" value="Genomic_DNA"/>
</dbReference>
<dbReference type="EMBL" id="DP000009">
    <property type="protein sequence ID" value="ABF94745.1"/>
    <property type="molecule type" value="Genomic_DNA"/>
</dbReference>
<dbReference type="EMBL" id="AP008209">
    <property type="protein sequence ID" value="BAF11353.1"/>
    <property type="status" value="ALT_SEQ"/>
    <property type="molecule type" value="Genomic_DNA"/>
</dbReference>
<dbReference type="EMBL" id="AP014959">
    <property type="protein sequence ID" value="BAS83061.1"/>
    <property type="molecule type" value="Genomic_DNA"/>
</dbReference>
<dbReference type="EMBL" id="CM000140">
    <property type="protein sequence ID" value="EAZ26130.1"/>
    <property type="status" value="ALT_SEQ"/>
    <property type="molecule type" value="Genomic_DNA"/>
</dbReference>
<dbReference type="EMBL" id="AK065961">
    <property type="protein sequence ID" value="BAG89754.1"/>
    <property type="molecule type" value="mRNA"/>
</dbReference>
<dbReference type="EMBL" id="AK070223">
    <property type="protein sequence ID" value="BAG91840.1"/>
    <property type="molecule type" value="mRNA"/>
</dbReference>
<dbReference type="RefSeq" id="XP_015633291.1">
    <property type="nucleotide sequence ID" value="XM_015777805.1"/>
</dbReference>
<dbReference type="SMR" id="Q10PP8"/>
<dbReference type="FunCoup" id="Q10PP8">
    <property type="interactions" value="6"/>
</dbReference>
<dbReference type="STRING" id="39947.Q10PP8"/>
<dbReference type="PaxDb" id="39947-Q10PP8"/>
<dbReference type="EnsemblPlants" id="Os03t0226400-01">
    <property type="protein sequence ID" value="Os03t0226400-01"/>
    <property type="gene ID" value="Os03g0226400"/>
</dbReference>
<dbReference type="EnsemblPlants" id="Os03t0226400-02">
    <property type="protein sequence ID" value="Os03t0226400-02"/>
    <property type="gene ID" value="Os03g0226400"/>
</dbReference>
<dbReference type="Gramene" id="Os03t0226400-01">
    <property type="protein sequence ID" value="Os03t0226400-01"/>
    <property type="gene ID" value="Os03g0226400"/>
</dbReference>
<dbReference type="Gramene" id="Os03t0226400-02">
    <property type="protein sequence ID" value="Os03t0226400-02"/>
    <property type="gene ID" value="Os03g0226400"/>
</dbReference>
<dbReference type="KEGG" id="dosa:Os03g0226400"/>
<dbReference type="eggNOG" id="KOG1485">
    <property type="taxonomic scope" value="Eukaryota"/>
</dbReference>
<dbReference type="HOGENOM" id="CLU_013430_2_3_1"/>
<dbReference type="InParanoid" id="Q10PP8"/>
<dbReference type="OMA" id="DCKTDVY"/>
<dbReference type="OrthoDB" id="78296at2759"/>
<dbReference type="Proteomes" id="UP000000763">
    <property type="component" value="Chromosome 3"/>
</dbReference>
<dbReference type="Proteomes" id="UP000007752">
    <property type="component" value="Chromosome 3"/>
</dbReference>
<dbReference type="Proteomes" id="UP000059680">
    <property type="component" value="Chromosome 3"/>
</dbReference>
<dbReference type="GO" id="GO:0016020">
    <property type="term" value="C:membrane"/>
    <property type="evidence" value="ECO:0000318"/>
    <property type="project" value="GO_Central"/>
</dbReference>
<dbReference type="GO" id="GO:0005774">
    <property type="term" value="C:vacuolar membrane"/>
    <property type="evidence" value="ECO:0007669"/>
    <property type="project" value="UniProtKB-SubCell"/>
</dbReference>
<dbReference type="GO" id="GO:0005384">
    <property type="term" value="F:manganese ion transmembrane transporter activity"/>
    <property type="evidence" value="ECO:0000318"/>
    <property type="project" value="GO_Central"/>
</dbReference>
<dbReference type="FunFam" id="1.20.1510.10:FF:000015">
    <property type="entry name" value="Metal tolerance protein 4"/>
    <property type="match status" value="1"/>
</dbReference>
<dbReference type="FunFam" id="3.30.70.1350:FF:000005">
    <property type="entry name" value="Metal tolerance protein 4"/>
    <property type="match status" value="1"/>
</dbReference>
<dbReference type="Gene3D" id="1.20.1510.10">
    <property type="entry name" value="Cation efflux protein transmembrane domain"/>
    <property type="match status" value="1"/>
</dbReference>
<dbReference type="Gene3D" id="3.30.70.1350">
    <property type="entry name" value="Cation efflux protein, cytoplasmic domain"/>
    <property type="match status" value="1"/>
</dbReference>
<dbReference type="InterPro" id="IPR002524">
    <property type="entry name" value="Cation_efflux"/>
</dbReference>
<dbReference type="InterPro" id="IPR027470">
    <property type="entry name" value="Cation_efflux_CTD"/>
</dbReference>
<dbReference type="InterPro" id="IPR036837">
    <property type="entry name" value="Cation_efflux_CTD_sf"/>
</dbReference>
<dbReference type="InterPro" id="IPR027469">
    <property type="entry name" value="Cation_efflux_TMD_sf"/>
</dbReference>
<dbReference type="InterPro" id="IPR050291">
    <property type="entry name" value="CDF_Transporter"/>
</dbReference>
<dbReference type="NCBIfam" id="TIGR01297">
    <property type="entry name" value="CDF"/>
    <property type="match status" value="1"/>
</dbReference>
<dbReference type="PANTHER" id="PTHR43840:SF13">
    <property type="entry name" value="CATION EFFLUX PROTEIN CYTOPLASMIC DOMAIN-CONTAINING PROTEIN"/>
    <property type="match status" value="1"/>
</dbReference>
<dbReference type="PANTHER" id="PTHR43840">
    <property type="entry name" value="MITOCHONDRIAL METAL TRANSPORTER 1-RELATED"/>
    <property type="match status" value="1"/>
</dbReference>
<dbReference type="Pfam" id="PF01545">
    <property type="entry name" value="Cation_efflux"/>
    <property type="match status" value="1"/>
</dbReference>
<dbReference type="Pfam" id="PF16916">
    <property type="entry name" value="ZT_dimer"/>
    <property type="match status" value="1"/>
</dbReference>
<dbReference type="SUPFAM" id="SSF160240">
    <property type="entry name" value="Cation efflux protein cytoplasmic domain-like"/>
    <property type="match status" value="1"/>
</dbReference>
<dbReference type="SUPFAM" id="SSF161111">
    <property type="entry name" value="Cation efflux protein transmembrane domain-like"/>
    <property type="match status" value="1"/>
</dbReference>
<sequence length="397" mass="44704">MEAKGENDARAPLLAERRRNSVGSMRGEFVSRLPKKVLDAVDPERPSHVDFSRSKGLREGEKEYYEKQFATLRSFEEVDSIEESNVMSEEDDIAEQKQSEFAMKISNYANMILLALKIYATIKSGSIAIAASTLDSLLDLMAGGILWFTHLSMKSINVYKYPIGKLRVQPVGIIIFAAVMATLGFQVFVQAVEKLIVNETPDKLTPVQLTWLYSIMIFATVVKLALWLYCRTSGNKIVRAYAKDHYFDVVTNVVGLAAAVLGDMFYWWIDPVGAIALAVYTITNWSGTVWENAVSLVGESAPPEMLQKLTYLAIRHHPQIKRVDTVRAYTFGVLYFVEVDIELPEELPLKEAHAIGESLQIKIEELPEVERAFVHLDFECDHKPEHNILSKLPSSQP</sequence>
<accession>Q10PP8</accession>
<accession>A0A0P0VUZ2</accession>
<accession>Q0DTT5</accession>
<accession>Q8H7R1</accession>
<name>MTP4_ORYSJ</name>
<protein>
    <recommendedName>
        <fullName>Metal tolerance protein 4</fullName>
        <shortName>OsMTP4</shortName>
    </recommendedName>
</protein>